<feature type="chain" id="PRO_0000224523" description="Valine--tRNA ligase">
    <location>
        <begin position="1"/>
        <end position="949"/>
    </location>
</feature>
<feature type="coiled-coil region" evidence="1">
    <location>
        <begin position="882"/>
        <end position="949"/>
    </location>
</feature>
<feature type="short sequence motif" description="'HIGH' region">
    <location>
        <begin position="45"/>
        <end position="55"/>
    </location>
</feature>
<feature type="short sequence motif" description="'KMSKS' region">
    <location>
        <begin position="561"/>
        <end position="565"/>
    </location>
</feature>
<feature type="binding site" evidence="1">
    <location>
        <position position="564"/>
    </location>
    <ligand>
        <name>ATP</name>
        <dbReference type="ChEBI" id="CHEBI:30616"/>
    </ligand>
</feature>
<evidence type="ECO:0000255" key="1">
    <source>
        <dbReference type="HAMAP-Rule" id="MF_02004"/>
    </source>
</evidence>
<accession>Q6MAM1</accession>
<reference key="1">
    <citation type="journal article" date="2004" name="Science">
        <title>Illuminating the evolutionary history of chlamydiae.</title>
        <authorList>
            <person name="Horn M."/>
            <person name="Collingro A."/>
            <person name="Schmitz-Esser S."/>
            <person name="Beier C.L."/>
            <person name="Purkhold U."/>
            <person name="Fartmann B."/>
            <person name="Brandt P."/>
            <person name="Nyakatura G.J."/>
            <person name="Droege M."/>
            <person name="Frishman D."/>
            <person name="Rattei T."/>
            <person name="Mewes H.-W."/>
            <person name="Wagner M."/>
        </authorList>
    </citation>
    <scope>NUCLEOTIDE SEQUENCE [LARGE SCALE GENOMIC DNA]</scope>
    <source>
        <strain>UWE25</strain>
    </source>
</reference>
<sequence>MTELPKAYEAKKIDEKWYQFWDAKRYFTANPLSNKPTYCIVIPPPNVTGVLHMGHALVNTVQDILIRWKRMLGFETLWVPGTDHAGIATQMVVERHLIKTEGKKRTDYTREEFLKHVWTWKEKSENRIIEQLKRLGNSCDWTRLRFTMDENNSLAVRTMFKKLFDDGLIYRGDYLVNWDPHTQTALADDEVEYEDKQSFLWYFKYPLRDESEFISIATTRPETMLGDTAVAVSPNDERFKHLIGKEIRLPLMNRLIPIIADHHVDPSFGTGVVKITPAHDPNDYQIGLSHRLPFINIMTPDGKINENGGHFQGLSMTEARHAVVSEMKEKGLLEKVEPHLNRVGISYRSKAIIEPYLSKQWFVKMDGFSKKLREVVQNGQVKLIPSHWESTYFHWIDNLRDWCISRQLWWGHRIPIWYHKEDSNRLICYAGSDLPDEVKNAPEEWIQDSDVLDTWFSSALWPFSTLGWPEQTSELAKFYPTSVLVTGHDILFFWVARMILMGDYALDQPPFPETYLLGLIYGKSYWRQESNGGILYVNEQERSDFDMGKPIPKEVFSKWEKMSKSKGNIIDPLEMIDQFGTDAVRMALCASATQARQIDLDRRRFEEFKNFTNKIWNGARFVLMNLDGNEQNRTMSLTSQGFSQGLDEALFTLEDRWILSVLNRTVESVNVHLNHYQFDQAAIEAYDFFWKEFCAYYVEIAKPILFGKIGTAQERTNKQKLLVIVLCQAIRLIHPMAPFITEELFHILKERLEGVEALTNADPYTKECIQALQSSACLVAPYPVRIGEKNQKVEAVFALMEQIVYTIRNIRGEMKLSPGTATDVYIIGQADDPEWQSAREHITMISALVKTRRILVETEEPKIGFACTGVYHALKIQLPLPEELLKQEKTRLNKEQEKLEISLEKLKNQLSNTDFVRRAPAHLTEKQNQQLSQTEQELREIKEKLMTLP</sequence>
<proteinExistence type="inferred from homology"/>
<organism>
    <name type="scientific">Protochlamydia amoebophila (strain UWE25)</name>
    <dbReference type="NCBI Taxonomy" id="264201"/>
    <lineage>
        <taxon>Bacteria</taxon>
        <taxon>Pseudomonadati</taxon>
        <taxon>Chlamydiota</taxon>
        <taxon>Chlamydiia</taxon>
        <taxon>Parachlamydiales</taxon>
        <taxon>Parachlamydiaceae</taxon>
        <taxon>Candidatus Protochlamydia</taxon>
    </lineage>
</organism>
<dbReference type="EC" id="6.1.1.9" evidence="1"/>
<dbReference type="EMBL" id="BX908798">
    <property type="protein sequence ID" value="CAF24378.1"/>
    <property type="molecule type" value="Genomic_DNA"/>
</dbReference>
<dbReference type="RefSeq" id="WP_011176200.1">
    <property type="nucleotide sequence ID" value="NC_005861.2"/>
</dbReference>
<dbReference type="SMR" id="Q6MAM1"/>
<dbReference type="STRING" id="264201.pc1654"/>
<dbReference type="KEGG" id="pcu:PC_RS07910"/>
<dbReference type="eggNOG" id="COG0525">
    <property type="taxonomic scope" value="Bacteria"/>
</dbReference>
<dbReference type="HOGENOM" id="CLU_001493_0_2_0"/>
<dbReference type="OrthoDB" id="9810365at2"/>
<dbReference type="Proteomes" id="UP000000529">
    <property type="component" value="Chromosome"/>
</dbReference>
<dbReference type="GO" id="GO:0005829">
    <property type="term" value="C:cytosol"/>
    <property type="evidence" value="ECO:0007669"/>
    <property type="project" value="TreeGrafter"/>
</dbReference>
<dbReference type="GO" id="GO:0002161">
    <property type="term" value="F:aminoacyl-tRNA deacylase activity"/>
    <property type="evidence" value="ECO:0007669"/>
    <property type="project" value="InterPro"/>
</dbReference>
<dbReference type="GO" id="GO:0005524">
    <property type="term" value="F:ATP binding"/>
    <property type="evidence" value="ECO:0007669"/>
    <property type="project" value="UniProtKB-UniRule"/>
</dbReference>
<dbReference type="GO" id="GO:0004832">
    <property type="term" value="F:valine-tRNA ligase activity"/>
    <property type="evidence" value="ECO:0007669"/>
    <property type="project" value="UniProtKB-UniRule"/>
</dbReference>
<dbReference type="GO" id="GO:0006438">
    <property type="term" value="P:valyl-tRNA aminoacylation"/>
    <property type="evidence" value="ECO:0007669"/>
    <property type="project" value="UniProtKB-UniRule"/>
</dbReference>
<dbReference type="CDD" id="cd07962">
    <property type="entry name" value="Anticodon_Ia_Val"/>
    <property type="match status" value="1"/>
</dbReference>
<dbReference type="CDD" id="cd00817">
    <property type="entry name" value="ValRS_core"/>
    <property type="match status" value="1"/>
</dbReference>
<dbReference type="FunFam" id="3.40.50.620:FF:000032">
    <property type="entry name" value="Valine--tRNA ligase"/>
    <property type="match status" value="1"/>
</dbReference>
<dbReference type="FunFam" id="3.40.50.620:FF:000098">
    <property type="entry name" value="Valine--tRNA ligase"/>
    <property type="match status" value="1"/>
</dbReference>
<dbReference type="FunFam" id="3.90.740.10:FF:000005">
    <property type="entry name" value="Valine--tRNA ligase, mitochondrial"/>
    <property type="match status" value="1"/>
</dbReference>
<dbReference type="Gene3D" id="3.40.50.620">
    <property type="entry name" value="HUPs"/>
    <property type="match status" value="2"/>
</dbReference>
<dbReference type="Gene3D" id="1.10.730.10">
    <property type="entry name" value="Isoleucyl-tRNA Synthetase, Domain 1"/>
    <property type="match status" value="1"/>
</dbReference>
<dbReference type="Gene3D" id="1.10.287.380">
    <property type="entry name" value="Valyl-tRNA synthetase, C-terminal domain"/>
    <property type="match status" value="1"/>
</dbReference>
<dbReference type="Gene3D" id="3.90.740.10">
    <property type="entry name" value="Valyl/Leucyl/Isoleucyl-tRNA synthetase, editing domain"/>
    <property type="match status" value="1"/>
</dbReference>
<dbReference type="HAMAP" id="MF_02004">
    <property type="entry name" value="Val_tRNA_synth_type1"/>
    <property type="match status" value="1"/>
</dbReference>
<dbReference type="InterPro" id="IPR001412">
    <property type="entry name" value="aa-tRNA-synth_I_CS"/>
</dbReference>
<dbReference type="InterPro" id="IPR002300">
    <property type="entry name" value="aa-tRNA-synth_Ia"/>
</dbReference>
<dbReference type="InterPro" id="IPR033705">
    <property type="entry name" value="Anticodon_Ia_Val"/>
</dbReference>
<dbReference type="InterPro" id="IPR013155">
    <property type="entry name" value="M/V/L/I-tRNA-synth_anticd-bd"/>
</dbReference>
<dbReference type="InterPro" id="IPR014729">
    <property type="entry name" value="Rossmann-like_a/b/a_fold"/>
</dbReference>
<dbReference type="InterPro" id="IPR010978">
    <property type="entry name" value="tRNA-bd_arm"/>
</dbReference>
<dbReference type="InterPro" id="IPR009080">
    <property type="entry name" value="tRNAsynth_Ia_anticodon-bd"/>
</dbReference>
<dbReference type="InterPro" id="IPR037118">
    <property type="entry name" value="Val-tRNA_synth_C_sf"/>
</dbReference>
<dbReference type="InterPro" id="IPR019499">
    <property type="entry name" value="Val-tRNA_synth_tRNA-bd"/>
</dbReference>
<dbReference type="InterPro" id="IPR009008">
    <property type="entry name" value="Val/Leu/Ile-tRNA-synth_edit"/>
</dbReference>
<dbReference type="InterPro" id="IPR002303">
    <property type="entry name" value="Valyl-tRNA_ligase"/>
</dbReference>
<dbReference type="NCBIfam" id="NF004349">
    <property type="entry name" value="PRK05729.1"/>
    <property type="match status" value="1"/>
</dbReference>
<dbReference type="NCBIfam" id="TIGR00422">
    <property type="entry name" value="valS"/>
    <property type="match status" value="1"/>
</dbReference>
<dbReference type="PANTHER" id="PTHR11946:SF93">
    <property type="entry name" value="VALINE--TRNA LIGASE, CHLOROPLASTIC_MITOCHONDRIAL 2"/>
    <property type="match status" value="1"/>
</dbReference>
<dbReference type="PANTHER" id="PTHR11946">
    <property type="entry name" value="VALYL-TRNA SYNTHETASES"/>
    <property type="match status" value="1"/>
</dbReference>
<dbReference type="Pfam" id="PF08264">
    <property type="entry name" value="Anticodon_1"/>
    <property type="match status" value="1"/>
</dbReference>
<dbReference type="Pfam" id="PF00133">
    <property type="entry name" value="tRNA-synt_1"/>
    <property type="match status" value="2"/>
</dbReference>
<dbReference type="Pfam" id="PF10458">
    <property type="entry name" value="Val_tRNA-synt_C"/>
    <property type="match status" value="1"/>
</dbReference>
<dbReference type="PRINTS" id="PR00986">
    <property type="entry name" value="TRNASYNTHVAL"/>
</dbReference>
<dbReference type="SUPFAM" id="SSF47323">
    <property type="entry name" value="Anticodon-binding domain of a subclass of class I aminoacyl-tRNA synthetases"/>
    <property type="match status" value="1"/>
</dbReference>
<dbReference type="SUPFAM" id="SSF52374">
    <property type="entry name" value="Nucleotidylyl transferase"/>
    <property type="match status" value="1"/>
</dbReference>
<dbReference type="SUPFAM" id="SSF46589">
    <property type="entry name" value="tRNA-binding arm"/>
    <property type="match status" value="1"/>
</dbReference>
<dbReference type="SUPFAM" id="SSF50677">
    <property type="entry name" value="ValRS/IleRS/LeuRS editing domain"/>
    <property type="match status" value="1"/>
</dbReference>
<dbReference type="PROSITE" id="PS00178">
    <property type="entry name" value="AA_TRNA_LIGASE_I"/>
    <property type="match status" value="1"/>
</dbReference>
<name>SYV_PARUW</name>
<gene>
    <name evidence="1" type="primary">valS</name>
    <name type="ordered locus">pc1654</name>
</gene>
<comment type="function">
    <text evidence="1">Catalyzes the attachment of valine to tRNA(Val). As ValRS can inadvertently accommodate and process structurally similar amino acids such as threonine, to avoid such errors, it has a 'posttransfer' editing activity that hydrolyzes mischarged Thr-tRNA(Val) in a tRNA-dependent manner.</text>
</comment>
<comment type="catalytic activity">
    <reaction evidence="1">
        <text>tRNA(Val) + L-valine + ATP = L-valyl-tRNA(Val) + AMP + diphosphate</text>
        <dbReference type="Rhea" id="RHEA:10704"/>
        <dbReference type="Rhea" id="RHEA-COMP:9672"/>
        <dbReference type="Rhea" id="RHEA-COMP:9708"/>
        <dbReference type="ChEBI" id="CHEBI:30616"/>
        <dbReference type="ChEBI" id="CHEBI:33019"/>
        <dbReference type="ChEBI" id="CHEBI:57762"/>
        <dbReference type="ChEBI" id="CHEBI:78442"/>
        <dbReference type="ChEBI" id="CHEBI:78537"/>
        <dbReference type="ChEBI" id="CHEBI:456215"/>
        <dbReference type="EC" id="6.1.1.9"/>
    </reaction>
</comment>
<comment type="subunit">
    <text evidence="1">Monomer.</text>
</comment>
<comment type="subcellular location">
    <subcellularLocation>
        <location evidence="1">Cytoplasm</location>
    </subcellularLocation>
</comment>
<comment type="domain">
    <text evidence="1">ValRS has two distinct active sites: one for aminoacylation and one for editing. The misactivated threonine is translocated from the active site to the editing site.</text>
</comment>
<comment type="domain">
    <text evidence="1">The C-terminal coiled-coil domain is crucial for aminoacylation activity.</text>
</comment>
<comment type="similarity">
    <text evidence="1">Belongs to the class-I aminoacyl-tRNA synthetase family. ValS type 1 subfamily.</text>
</comment>
<protein>
    <recommendedName>
        <fullName evidence="1">Valine--tRNA ligase</fullName>
        <ecNumber evidence="1">6.1.1.9</ecNumber>
    </recommendedName>
    <alternativeName>
        <fullName evidence="1">Valyl-tRNA synthetase</fullName>
        <shortName evidence="1">ValRS</shortName>
    </alternativeName>
</protein>
<keyword id="KW-0030">Aminoacyl-tRNA synthetase</keyword>
<keyword id="KW-0067">ATP-binding</keyword>
<keyword id="KW-0175">Coiled coil</keyword>
<keyword id="KW-0963">Cytoplasm</keyword>
<keyword id="KW-0436">Ligase</keyword>
<keyword id="KW-0547">Nucleotide-binding</keyword>
<keyword id="KW-0648">Protein biosynthesis</keyword>
<keyword id="KW-1185">Reference proteome</keyword>